<dbReference type="EMBL" id="AE000782">
    <property type="protein sequence ID" value="AAB89909.1"/>
    <property type="molecule type" value="Genomic_DNA"/>
</dbReference>
<dbReference type="PIR" id="D69416">
    <property type="entry name" value="D69416"/>
</dbReference>
<dbReference type="RefSeq" id="WP_010878830.1">
    <property type="nucleotide sequence ID" value="NC_000917.1"/>
</dbReference>
<dbReference type="SMR" id="O28936"/>
<dbReference type="STRING" id="224325.AF_1333"/>
<dbReference type="PaxDb" id="224325-AF_1333"/>
<dbReference type="EnsemblBacteria" id="AAB89909">
    <property type="protein sequence ID" value="AAB89909"/>
    <property type="gene ID" value="AF_1333"/>
</dbReference>
<dbReference type="KEGG" id="afu:AF_1333"/>
<dbReference type="eggNOG" id="arCOG04109">
    <property type="taxonomic scope" value="Archaea"/>
</dbReference>
<dbReference type="HOGENOM" id="CLU_114645_3_0_2"/>
<dbReference type="OrthoDB" id="52456at2157"/>
<dbReference type="PhylomeDB" id="O28936"/>
<dbReference type="Proteomes" id="UP000002199">
    <property type="component" value="Chromosome"/>
</dbReference>
<dbReference type="GO" id="GO:1990904">
    <property type="term" value="C:ribonucleoprotein complex"/>
    <property type="evidence" value="ECO:0007669"/>
    <property type="project" value="UniProtKB-KW"/>
</dbReference>
<dbReference type="GO" id="GO:0005840">
    <property type="term" value="C:ribosome"/>
    <property type="evidence" value="ECO:0007669"/>
    <property type="project" value="UniProtKB-KW"/>
</dbReference>
<dbReference type="GO" id="GO:0070180">
    <property type="term" value="F:large ribosomal subunit rRNA binding"/>
    <property type="evidence" value="ECO:0007669"/>
    <property type="project" value="UniProtKB-UniRule"/>
</dbReference>
<dbReference type="GO" id="GO:0003735">
    <property type="term" value="F:structural constituent of ribosome"/>
    <property type="evidence" value="ECO:0007669"/>
    <property type="project" value="InterPro"/>
</dbReference>
<dbReference type="GO" id="GO:0008270">
    <property type="term" value="F:zinc ion binding"/>
    <property type="evidence" value="ECO:0007669"/>
    <property type="project" value="UniProtKB-UniRule"/>
</dbReference>
<dbReference type="GO" id="GO:0006412">
    <property type="term" value="P:translation"/>
    <property type="evidence" value="ECO:0007669"/>
    <property type="project" value="UniProtKB-UniRule"/>
</dbReference>
<dbReference type="Gene3D" id="3.10.450.80">
    <property type="match status" value="1"/>
</dbReference>
<dbReference type="HAMAP" id="MF_01476">
    <property type="entry name" value="Ribosomal_L44e"/>
    <property type="match status" value="1"/>
</dbReference>
<dbReference type="InterPro" id="IPR000552">
    <property type="entry name" value="Ribosomal_eL44"/>
</dbReference>
<dbReference type="InterPro" id="IPR053708">
    <property type="entry name" value="Ribosomal_LSU_eL42"/>
</dbReference>
<dbReference type="InterPro" id="IPR011332">
    <property type="entry name" value="Ribosomal_zn-bd"/>
</dbReference>
<dbReference type="NCBIfam" id="NF004425">
    <property type="entry name" value="PRK05767.1"/>
    <property type="match status" value="1"/>
</dbReference>
<dbReference type="PANTHER" id="PTHR10369">
    <property type="entry name" value="60S RIBOSOMAL PROTEIN L36A/L44"/>
    <property type="match status" value="1"/>
</dbReference>
<dbReference type="Pfam" id="PF00935">
    <property type="entry name" value="Ribosomal_L44"/>
    <property type="match status" value="1"/>
</dbReference>
<dbReference type="SUPFAM" id="SSF57829">
    <property type="entry name" value="Zn-binding ribosomal proteins"/>
    <property type="match status" value="1"/>
</dbReference>
<keyword id="KW-0479">Metal-binding</keyword>
<keyword id="KW-1185">Reference proteome</keyword>
<keyword id="KW-0687">Ribonucleoprotein</keyword>
<keyword id="KW-0689">Ribosomal protein</keyword>
<keyword id="KW-0694">RNA-binding</keyword>
<keyword id="KW-0699">rRNA-binding</keyword>
<keyword id="KW-0862">Zinc</keyword>
<keyword id="KW-0863">Zinc-finger</keyword>
<organism>
    <name type="scientific">Archaeoglobus fulgidus (strain ATCC 49558 / DSM 4304 / JCM 9628 / NBRC 100126 / VC-16)</name>
    <dbReference type="NCBI Taxonomy" id="224325"/>
    <lineage>
        <taxon>Archaea</taxon>
        <taxon>Methanobacteriati</taxon>
        <taxon>Methanobacteriota</taxon>
        <taxon>Archaeoglobi</taxon>
        <taxon>Archaeoglobales</taxon>
        <taxon>Archaeoglobaceae</taxon>
        <taxon>Archaeoglobus</taxon>
    </lineage>
</organism>
<proteinExistence type="inferred from homology"/>
<name>RL44E_ARCFU</name>
<accession>O28936</accession>
<protein>
    <recommendedName>
        <fullName evidence="1">Large ribosomal subunit protein eL42</fullName>
    </recommendedName>
    <alternativeName>
        <fullName evidence="2">50S ribosomal protein L44e</fullName>
    </alternativeName>
</protein>
<sequence length="93" mass="11038">MKYPKKVKTFCRYCGKHTLHEVERVSKGKASSLNWINRQKKRRGKVGNLGKFSKVPGGDKPTKRVNIRFRCTECKKAHHRPTWRAKRFELIER</sequence>
<gene>
    <name evidence="1" type="primary">rpl44e</name>
    <name type="ordered locus">AF_1333</name>
</gene>
<comment type="function">
    <text evidence="1">Binds to the 23S rRNA.</text>
</comment>
<comment type="cofactor">
    <cofactor evidence="1">
        <name>Zn(2+)</name>
        <dbReference type="ChEBI" id="CHEBI:29105"/>
    </cofactor>
    <text evidence="1">Binds 1 zinc ion per subunit.</text>
</comment>
<comment type="subunit">
    <text evidence="1">Part of the 50S ribosomal subunit.</text>
</comment>
<comment type="similarity">
    <text evidence="1">Belongs to the eukaryotic ribosomal protein eL42 family.</text>
</comment>
<evidence type="ECO:0000255" key="1">
    <source>
        <dbReference type="HAMAP-Rule" id="MF_01476"/>
    </source>
</evidence>
<evidence type="ECO:0000305" key="2"/>
<feature type="chain" id="PRO_0000149149" description="Large ribosomal subunit protein eL42">
    <location>
        <begin position="1"/>
        <end position="93"/>
    </location>
</feature>
<feature type="zinc finger region" description="C4-type" evidence="1">
    <location>
        <begin position="11"/>
        <end position="74"/>
    </location>
</feature>
<feature type="binding site" evidence="1">
    <location>
        <position position="11"/>
    </location>
    <ligand>
        <name>Zn(2+)</name>
        <dbReference type="ChEBI" id="CHEBI:29105"/>
    </ligand>
</feature>
<feature type="binding site" evidence="1">
    <location>
        <position position="14"/>
    </location>
    <ligand>
        <name>Zn(2+)</name>
        <dbReference type="ChEBI" id="CHEBI:29105"/>
    </ligand>
</feature>
<feature type="binding site" evidence="1">
    <location>
        <position position="71"/>
    </location>
    <ligand>
        <name>Zn(2+)</name>
        <dbReference type="ChEBI" id="CHEBI:29105"/>
    </ligand>
</feature>
<feature type="binding site" evidence="1">
    <location>
        <position position="74"/>
    </location>
    <ligand>
        <name>Zn(2+)</name>
        <dbReference type="ChEBI" id="CHEBI:29105"/>
    </ligand>
</feature>
<reference key="1">
    <citation type="journal article" date="1997" name="Nature">
        <title>The complete genome sequence of the hyperthermophilic, sulphate-reducing archaeon Archaeoglobus fulgidus.</title>
        <authorList>
            <person name="Klenk H.-P."/>
            <person name="Clayton R.A."/>
            <person name="Tomb J.-F."/>
            <person name="White O."/>
            <person name="Nelson K.E."/>
            <person name="Ketchum K.A."/>
            <person name="Dodson R.J."/>
            <person name="Gwinn M.L."/>
            <person name="Hickey E.K."/>
            <person name="Peterson J.D."/>
            <person name="Richardson D.L."/>
            <person name="Kerlavage A.R."/>
            <person name="Graham D.E."/>
            <person name="Kyrpides N.C."/>
            <person name="Fleischmann R.D."/>
            <person name="Quackenbush J."/>
            <person name="Lee N.H."/>
            <person name="Sutton G.G."/>
            <person name="Gill S.R."/>
            <person name="Kirkness E.F."/>
            <person name="Dougherty B.A."/>
            <person name="McKenney K."/>
            <person name="Adams M.D."/>
            <person name="Loftus B.J."/>
            <person name="Peterson S.N."/>
            <person name="Reich C.I."/>
            <person name="McNeil L.K."/>
            <person name="Badger J.H."/>
            <person name="Glodek A."/>
            <person name="Zhou L."/>
            <person name="Overbeek R."/>
            <person name="Gocayne J.D."/>
            <person name="Weidman J.F."/>
            <person name="McDonald L.A."/>
            <person name="Utterback T.R."/>
            <person name="Cotton M.D."/>
            <person name="Spriggs T."/>
            <person name="Artiach P."/>
            <person name="Kaine B.P."/>
            <person name="Sykes S.M."/>
            <person name="Sadow P.W."/>
            <person name="D'Andrea K.P."/>
            <person name="Bowman C."/>
            <person name="Fujii C."/>
            <person name="Garland S.A."/>
            <person name="Mason T.M."/>
            <person name="Olsen G.J."/>
            <person name="Fraser C.M."/>
            <person name="Smith H.O."/>
            <person name="Woese C.R."/>
            <person name="Venter J.C."/>
        </authorList>
    </citation>
    <scope>NUCLEOTIDE SEQUENCE [LARGE SCALE GENOMIC DNA]</scope>
    <source>
        <strain>ATCC 49558 / DSM 4304 / JCM 9628 / NBRC 100126 / VC-16</strain>
    </source>
</reference>